<organism>
    <name type="scientific">Chromohalobacter salexigens (strain ATCC BAA-138 / DSM 3043 / CIP 106854 / NCIMB 13768 / 1H11)</name>
    <dbReference type="NCBI Taxonomy" id="290398"/>
    <lineage>
        <taxon>Bacteria</taxon>
        <taxon>Pseudomonadati</taxon>
        <taxon>Pseudomonadota</taxon>
        <taxon>Gammaproteobacteria</taxon>
        <taxon>Oceanospirillales</taxon>
        <taxon>Halomonadaceae</taxon>
        <taxon>Chromohalobacter</taxon>
    </lineage>
</organism>
<name>CMOA_CHRSD</name>
<keyword id="KW-1185">Reference proteome</keyword>
<keyword id="KW-0949">S-adenosyl-L-methionine</keyword>
<keyword id="KW-0808">Transferase</keyword>
<proteinExistence type="inferred from homology"/>
<gene>
    <name evidence="1" type="primary">cmoA</name>
    <name type="ordered locus">Csal_2547</name>
</gene>
<protein>
    <recommendedName>
        <fullName evidence="1">Carboxy-S-adenosyl-L-methionine synthase</fullName>
        <shortName evidence="1">Cx-SAM synthase</shortName>
        <ecNumber evidence="1">2.1.3.-</ecNumber>
    </recommendedName>
</protein>
<sequence length="270" mass="30735">MTRRVQYRHFLWPRPRLDAIDWLMSDASYRDAIFSTPLDRVANFSFDEKVVACFPDMIRRSVPGYGQILGMLGLIAERHLRFGAHVYDLGCSLGAVTLALAGRLPPDAFTLTGVDLSPTMVARARETLGEECPDHRIDIVEGDIRHVDYRPAGMIVLNFTLQFLPPEDRRAVIERLYAALEPGGVLVLSEKIVLPDEQENAWLVERYHDFKRANGYSDMEISQKRTALENVLVPDTLDAHHERLHEAGFTRVSTWFQYLNFASMVAFKDA</sequence>
<comment type="function">
    <text evidence="1">Catalyzes the conversion of S-adenosyl-L-methionine (SAM) to carboxy-S-adenosyl-L-methionine (Cx-SAM).</text>
</comment>
<comment type="catalytic activity">
    <reaction evidence="1">
        <text>prephenate + S-adenosyl-L-methionine = carboxy-S-adenosyl-L-methionine + 3-phenylpyruvate + H2O</text>
        <dbReference type="Rhea" id="RHEA:51692"/>
        <dbReference type="ChEBI" id="CHEBI:15377"/>
        <dbReference type="ChEBI" id="CHEBI:18005"/>
        <dbReference type="ChEBI" id="CHEBI:29934"/>
        <dbReference type="ChEBI" id="CHEBI:59789"/>
        <dbReference type="ChEBI" id="CHEBI:134278"/>
    </reaction>
</comment>
<comment type="subunit">
    <text evidence="1">Homodimer.</text>
</comment>
<comment type="similarity">
    <text evidence="1">Belongs to the class I-like SAM-binding methyltransferase superfamily. Cx-SAM synthase family.</text>
</comment>
<evidence type="ECO:0000255" key="1">
    <source>
        <dbReference type="HAMAP-Rule" id="MF_01589"/>
    </source>
</evidence>
<accession>Q1QUG4</accession>
<reference key="1">
    <citation type="journal article" date="2011" name="Stand. Genomic Sci.">
        <title>Complete genome sequence of the halophilic and highly halotolerant Chromohalobacter salexigens type strain (1H11(T)).</title>
        <authorList>
            <person name="Copeland A."/>
            <person name="O'Connor K."/>
            <person name="Lucas S."/>
            <person name="Lapidus A."/>
            <person name="Berry K.W."/>
            <person name="Detter J.C."/>
            <person name="Del Rio T.G."/>
            <person name="Hammon N."/>
            <person name="Dalin E."/>
            <person name="Tice H."/>
            <person name="Pitluck S."/>
            <person name="Bruce D."/>
            <person name="Goodwin L."/>
            <person name="Han C."/>
            <person name="Tapia R."/>
            <person name="Saunders E."/>
            <person name="Schmutz J."/>
            <person name="Brettin T."/>
            <person name="Larimer F."/>
            <person name="Land M."/>
            <person name="Hauser L."/>
            <person name="Vargas C."/>
            <person name="Nieto J.J."/>
            <person name="Kyrpides N.C."/>
            <person name="Ivanova N."/>
            <person name="Goker M."/>
            <person name="Klenk H.P."/>
            <person name="Csonka L.N."/>
            <person name="Woyke T."/>
        </authorList>
    </citation>
    <scope>NUCLEOTIDE SEQUENCE [LARGE SCALE GENOMIC DNA]</scope>
    <source>
        <strain>ATCC BAA-138 / DSM 3043 / CIP 106854 / NCIMB 13768 / 1H11</strain>
    </source>
</reference>
<feature type="chain" id="PRO_0000314319" description="Carboxy-S-adenosyl-L-methionine synthase">
    <location>
        <begin position="1"/>
        <end position="270"/>
    </location>
</feature>
<feature type="binding site" evidence="1">
    <location>
        <position position="65"/>
    </location>
    <ligand>
        <name>S-adenosyl-L-methionine</name>
        <dbReference type="ChEBI" id="CHEBI:59789"/>
    </ligand>
</feature>
<feature type="binding site" evidence="1">
    <location>
        <begin position="90"/>
        <end position="92"/>
    </location>
    <ligand>
        <name>S-adenosyl-L-methionine</name>
        <dbReference type="ChEBI" id="CHEBI:59789"/>
    </ligand>
</feature>
<feature type="binding site" evidence="1">
    <location>
        <begin position="143"/>
        <end position="144"/>
    </location>
    <ligand>
        <name>S-adenosyl-L-methionine</name>
        <dbReference type="ChEBI" id="CHEBI:59789"/>
    </ligand>
</feature>
<feature type="binding site" evidence="1">
    <location>
        <position position="158"/>
    </location>
    <ligand>
        <name>S-adenosyl-L-methionine</name>
        <dbReference type="ChEBI" id="CHEBI:59789"/>
    </ligand>
</feature>
<feature type="binding site" evidence="1">
    <location>
        <position position="225"/>
    </location>
    <ligand>
        <name>S-adenosyl-L-methionine</name>
        <dbReference type="ChEBI" id="CHEBI:59789"/>
    </ligand>
</feature>
<dbReference type="EC" id="2.1.3.-" evidence="1"/>
<dbReference type="EMBL" id="CP000285">
    <property type="protein sequence ID" value="ABE59894.1"/>
    <property type="molecule type" value="Genomic_DNA"/>
</dbReference>
<dbReference type="SMR" id="Q1QUG4"/>
<dbReference type="STRING" id="290398.Csal_2547"/>
<dbReference type="KEGG" id="csa:Csal_2547"/>
<dbReference type="eggNOG" id="COG4106">
    <property type="taxonomic scope" value="Bacteria"/>
</dbReference>
<dbReference type="HOGENOM" id="CLU_078475_0_0_6"/>
<dbReference type="Proteomes" id="UP000000239">
    <property type="component" value="Chromosome"/>
</dbReference>
<dbReference type="GO" id="GO:0016743">
    <property type="term" value="F:carboxyl- or carbamoyltransferase activity"/>
    <property type="evidence" value="ECO:0007669"/>
    <property type="project" value="UniProtKB-UniRule"/>
</dbReference>
<dbReference type="GO" id="GO:1904047">
    <property type="term" value="F:S-adenosyl-L-methionine binding"/>
    <property type="evidence" value="ECO:0007669"/>
    <property type="project" value="UniProtKB-UniRule"/>
</dbReference>
<dbReference type="GO" id="GO:0002098">
    <property type="term" value="P:tRNA wobble uridine modification"/>
    <property type="evidence" value="ECO:0007669"/>
    <property type="project" value="InterPro"/>
</dbReference>
<dbReference type="CDD" id="cd02440">
    <property type="entry name" value="AdoMet_MTases"/>
    <property type="match status" value="1"/>
</dbReference>
<dbReference type="Gene3D" id="3.40.50.150">
    <property type="entry name" value="Vaccinia Virus protein VP39"/>
    <property type="match status" value="1"/>
</dbReference>
<dbReference type="HAMAP" id="MF_01589">
    <property type="entry name" value="Cx_SAM_synthase"/>
    <property type="match status" value="1"/>
</dbReference>
<dbReference type="InterPro" id="IPR005271">
    <property type="entry name" value="CmoA"/>
</dbReference>
<dbReference type="InterPro" id="IPR041698">
    <property type="entry name" value="Methyltransf_25"/>
</dbReference>
<dbReference type="InterPro" id="IPR029063">
    <property type="entry name" value="SAM-dependent_MTases_sf"/>
</dbReference>
<dbReference type="NCBIfam" id="TIGR00740">
    <property type="entry name" value="carboxy-S-adenosyl-L-methionine synthase CmoA"/>
    <property type="match status" value="1"/>
</dbReference>
<dbReference type="PANTHER" id="PTHR43861:SF2">
    <property type="entry name" value="CARBOXY-S-ADENOSYL-L-METHIONINE SYNTHASE"/>
    <property type="match status" value="1"/>
</dbReference>
<dbReference type="PANTHER" id="PTHR43861">
    <property type="entry name" value="TRANS-ACONITATE 2-METHYLTRANSFERASE-RELATED"/>
    <property type="match status" value="1"/>
</dbReference>
<dbReference type="Pfam" id="PF13649">
    <property type="entry name" value="Methyltransf_25"/>
    <property type="match status" value="1"/>
</dbReference>
<dbReference type="PIRSF" id="PIRSF006325">
    <property type="entry name" value="MeTrfase_bac"/>
    <property type="match status" value="1"/>
</dbReference>
<dbReference type="SUPFAM" id="SSF53335">
    <property type="entry name" value="S-adenosyl-L-methionine-dependent methyltransferases"/>
    <property type="match status" value="1"/>
</dbReference>